<feature type="chain" id="PRO_0000406636" description="Long-chain-fatty-acid--AMP ligase FadD32">
    <location>
        <begin position="1"/>
        <end position="629"/>
    </location>
</feature>
<feature type="binding site" evidence="1">
    <location>
        <begin position="186"/>
        <end position="191"/>
    </location>
    <ligand>
        <name>ATP</name>
        <dbReference type="ChEBI" id="CHEBI:30616"/>
    </ligand>
</feature>
<feature type="binding site" evidence="1">
    <location>
        <position position="341"/>
    </location>
    <ligand>
        <name>ATP</name>
        <dbReference type="ChEBI" id="CHEBI:30616"/>
    </ligand>
</feature>
<feature type="binding site" evidence="1">
    <location>
        <position position="345"/>
    </location>
    <ligand>
        <name>ATP</name>
        <dbReference type="ChEBI" id="CHEBI:30616"/>
    </ligand>
</feature>
<feature type="binding site" evidence="1">
    <location>
        <position position="468"/>
    </location>
    <ligand>
        <name>ATP</name>
        <dbReference type="ChEBI" id="CHEBI:30616"/>
    </ligand>
</feature>
<feature type="binding site" evidence="1">
    <location>
        <position position="482"/>
    </location>
    <ligand>
        <name>ATP</name>
        <dbReference type="ChEBI" id="CHEBI:30616"/>
    </ligand>
</feature>
<feature type="helix" evidence="6">
    <location>
        <begin position="21"/>
        <end position="31"/>
    </location>
</feature>
<feature type="strand" evidence="6">
    <location>
        <begin position="35"/>
        <end position="42"/>
    </location>
</feature>
<feature type="strand" evidence="6">
    <location>
        <begin position="50"/>
        <end position="55"/>
    </location>
</feature>
<feature type="helix" evidence="6">
    <location>
        <begin position="56"/>
        <end position="73"/>
    </location>
</feature>
<feature type="strand" evidence="6">
    <location>
        <begin position="79"/>
        <end position="82"/>
    </location>
</feature>
<feature type="helix" evidence="6">
    <location>
        <begin position="88"/>
        <end position="100"/>
    </location>
</feature>
<feature type="strand" evidence="6">
    <location>
        <begin position="102"/>
        <end position="106"/>
    </location>
</feature>
<feature type="helix" evidence="6">
    <location>
        <begin position="116"/>
        <end position="126"/>
    </location>
</feature>
<feature type="strand" evidence="6">
    <location>
        <begin position="129"/>
        <end position="133"/>
    </location>
</feature>
<feature type="helix" evidence="6">
    <location>
        <begin position="135"/>
        <end position="146"/>
    </location>
</feature>
<feature type="strand" evidence="6">
    <location>
        <begin position="155"/>
        <end position="158"/>
    </location>
</feature>
<feature type="helix" evidence="6">
    <location>
        <begin position="159"/>
        <end position="161"/>
    </location>
</feature>
<feature type="helix" evidence="6">
    <location>
        <begin position="164"/>
        <end position="169"/>
    </location>
</feature>
<feature type="strand" evidence="6">
    <location>
        <begin position="179"/>
        <end position="185"/>
    </location>
</feature>
<feature type="strand" evidence="6">
    <location>
        <begin position="195"/>
        <end position="199"/>
    </location>
</feature>
<feature type="helix" evidence="6">
    <location>
        <begin position="202"/>
        <end position="214"/>
    </location>
</feature>
<feature type="strand" evidence="6">
    <location>
        <begin position="221"/>
        <end position="224"/>
    </location>
</feature>
<feature type="helix" evidence="6">
    <location>
        <begin position="231"/>
        <end position="238"/>
    </location>
</feature>
<feature type="helix" evidence="6">
    <location>
        <begin position="240"/>
        <end position="243"/>
    </location>
</feature>
<feature type="strand" evidence="6">
    <location>
        <begin position="247"/>
        <end position="249"/>
    </location>
</feature>
<feature type="helix" evidence="6">
    <location>
        <begin position="252"/>
        <end position="257"/>
    </location>
</feature>
<feature type="helix" evidence="6">
    <location>
        <begin position="260"/>
        <end position="266"/>
    </location>
</feature>
<feature type="strand" evidence="6">
    <location>
        <begin position="276"/>
        <end position="280"/>
    </location>
</feature>
<feature type="helix" evidence="6">
    <location>
        <begin position="282"/>
        <end position="291"/>
    </location>
</feature>
<feature type="strand" evidence="6">
    <location>
        <begin position="306"/>
        <end position="311"/>
    </location>
</feature>
<feature type="helix" evidence="6">
    <location>
        <begin position="318"/>
        <end position="328"/>
    </location>
</feature>
<feature type="helix" evidence="6">
    <location>
        <begin position="329"/>
        <end position="331"/>
    </location>
</feature>
<feature type="strand" evidence="6">
    <location>
        <begin position="337"/>
        <end position="343"/>
    </location>
</feature>
<feature type="helix" evidence="6">
    <location>
        <begin position="345"/>
        <end position="347"/>
    </location>
</feature>
<feature type="strand" evidence="6">
    <location>
        <begin position="348"/>
        <end position="353"/>
    </location>
</feature>
<feature type="strand" evidence="6">
    <location>
        <begin position="362"/>
        <end position="366"/>
    </location>
</feature>
<feature type="helix" evidence="6">
    <location>
        <begin position="367"/>
        <end position="371"/>
    </location>
</feature>
<feature type="strand" evidence="6">
    <location>
        <begin position="385"/>
        <end position="390"/>
    </location>
</feature>
<feature type="strand" evidence="6">
    <location>
        <begin position="398"/>
        <end position="404"/>
    </location>
</feature>
<feature type="turn" evidence="6">
    <location>
        <begin position="405"/>
        <end position="408"/>
    </location>
</feature>
<feature type="strand" evidence="6">
    <location>
        <begin position="417"/>
        <end position="423"/>
    </location>
</feature>
<feature type="helix" evidence="6">
    <location>
        <begin position="434"/>
        <end position="441"/>
    </location>
</feature>
<feature type="turn" evidence="6">
    <location>
        <begin position="453"/>
        <end position="456"/>
    </location>
</feature>
<feature type="strand" evidence="6">
    <location>
        <begin position="462"/>
        <end position="473"/>
    </location>
</feature>
<feature type="strand" evidence="6">
    <location>
        <begin position="476"/>
        <end position="482"/>
    </location>
</feature>
<feature type="helix" evidence="6">
    <location>
        <begin position="483"/>
        <end position="485"/>
    </location>
</feature>
<feature type="strand" evidence="6">
    <location>
        <begin position="487"/>
        <end position="489"/>
    </location>
</feature>
<feature type="strand" evidence="6">
    <location>
        <begin position="492"/>
        <end position="494"/>
    </location>
</feature>
<feature type="helix" evidence="6">
    <location>
        <begin position="496"/>
        <end position="505"/>
    </location>
</feature>
<feature type="strand" evidence="6">
    <location>
        <begin position="510"/>
        <end position="521"/>
    </location>
</feature>
<feature type="helix" evidence="6">
    <location>
        <begin position="522"/>
        <end position="524"/>
    </location>
</feature>
<feature type="helix" evidence="6">
    <location>
        <begin position="527"/>
        <end position="531"/>
    </location>
</feature>
<feature type="turn" evidence="6">
    <location>
        <begin position="533"/>
        <end position="535"/>
    </location>
</feature>
<feature type="strand" evidence="6">
    <location>
        <begin position="546"/>
        <end position="554"/>
    </location>
</feature>
<feature type="helix" evidence="6">
    <location>
        <begin position="563"/>
        <end position="578"/>
    </location>
</feature>
<feature type="strand" evidence="6">
    <location>
        <begin position="582"/>
        <end position="588"/>
    </location>
</feature>
<feature type="helix" evidence="6">
    <location>
        <begin position="603"/>
        <end position="611"/>
    </location>
</feature>
<feature type="turn" evidence="6">
    <location>
        <begin position="612"/>
        <end position="616"/>
    </location>
</feature>
<sequence length="629" mass="68891">MAYHNPFIVNGKIRFPENTNLVRHVEKWARVRGDKLAYRFLDFSTERDGVERDILWSEFSARNRAVGARLQQVTQPGDRIAILCPQNLDYLISFFGALYSGRIAVPLFDPAEPGHVGRLHAVLDDCTPSTILTTTDSAEGVRKFIRSRSAKERPRVIAVDAVPTEVASTWQQPEANELTTAYLQYTSGSTRVPSGVQITHLNLPTNVLQVLNALEGQEGDRGVSWLPFFHDMGLITVLLASVLGHSFTFMTPAAFVRRPGRWIRELARKPGETGGTFSAAPNFAFEHAAMRGVPRDDEPPLDLSNVKGILNGSEPVSPASMRKFFKAFEPYGLRETAVKPSYGLAEATLFVSTTPMDEVPTVIHVDRDELNKQRFVEVAADAPNAVAQVSAGKVGVDEWAVIVDTETASELPDGQIGEIWLHGNNLGIGYWGKEEESAQTFRNILKSRVPESHAEGAPDDGLWVRTGDYGTYFKGHLYIAGRIKDLVIIDGRNHYPQDLEYTAQESTKALRVGYVAAFSVPANQLPQKVFDDPHAGLSFDPEDTSEQLVIVGERAAGTHKLEYQPIADDIRAAIAVGHGVTVRDVLLVSAGTIPRTSSGKIGRRACRTAYIDGSLRSGVSSPTVFATGS</sequence>
<gene>
    <name type="primary">fadD32</name>
    <name type="ordered locus">MMAR_5365</name>
</gene>
<reference key="1">
    <citation type="journal article" date="2008" name="Genome Res.">
        <title>Insights from the complete genome sequence of Mycobacterium marinum on the evolution of Mycobacterium tuberculosis.</title>
        <authorList>
            <person name="Stinear T.P."/>
            <person name="Seemann T."/>
            <person name="Harrison P.F."/>
            <person name="Jenkin G.A."/>
            <person name="Davies J.K."/>
            <person name="Johnson P.D."/>
            <person name="Abdellah Z."/>
            <person name="Arrowsmith C."/>
            <person name="Chillingworth T."/>
            <person name="Churcher C."/>
            <person name="Clarke K."/>
            <person name="Cronin A."/>
            <person name="Davis P."/>
            <person name="Goodhead I."/>
            <person name="Holroyd N."/>
            <person name="Jagels K."/>
            <person name="Lord A."/>
            <person name="Moule S."/>
            <person name="Mungall K."/>
            <person name="Norbertczak H."/>
            <person name="Quail M.A."/>
            <person name="Rabbinowitsch E."/>
            <person name="Walker D."/>
            <person name="White B."/>
            <person name="Whitehead S."/>
            <person name="Small P.L."/>
            <person name="Brosch R."/>
            <person name="Ramakrishnan L."/>
            <person name="Fischbach M.A."/>
            <person name="Parkhill J."/>
            <person name="Cole S.T."/>
        </authorList>
    </citation>
    <scope>NUCLEOTIDE SEQUENCE [LARGE SCALE GENOMIC DNA]</scope>
    <source>
        <strain>ATCC BAA-535 / M</strain>
    </source>
</reference>
<reference evidence="5" key="2">
    <citation type="journal article" date="2016" name="J. Biol. Chem.">
        <title>Insight into structure-function relationships and inhibition of the fatty acyl-AMP ligase (FadD32) orthologs from Mycobacteria.</title>
        <authorList>
            <person name="Guillet V."/>
            <person name="Galandrin S."/>
            <person name="Maveyraud L."/>
            <person name="Ladeveze S."/>
            <person name="Mariaule V."/>
            <person name="Bon C."/>
            <person name="Eynard N."/>
            <person name="Daffe M."/>
            <person name="Marrakchi H."/>
            <person name="Mourey L."/>
        </authorList>
    </citation>
    <scope>X-RAY CRYSTALLOGRAPHY (2.50 ANGSTROMS) IN COMPLEX WITH ALKYL ADENYLATE INHIBITOR AMPC12</scope>
    <scope>FUNCTION</scope>
    <scope>CATALYTIC ACTIVITY</scope>
    <scope>ACTIVITY REGULATION</scope>
    <scope>BIOPHYSICOCHEMICAL PROPERTIES</scope>
    <scope>SUBUNIT</scope>
</reference>
<protein>
    <recommendedName>
        <fullName>Long-chain-fatty-acid--AMP ligase FadD32</fullName>
        <shortName>FAAL</shortName>
        <ecNumber evidence="2">6.2.1.20</ecNumber>
    </recommendedName>
    <alternativeName>
        <fullName>Acyl-AMP synthetase</fullName>
    </alternativeName>
</protein>
<evidence type="ECO:0000250" key="1">
    <source>
        <dbReference type="UniProtKB" id="A0R618"/>
    </source>
</evidence>
<evidence type="ECO:0000250" key="2">
    <source>
        <dbReference type="UniProtKB" id="O53580"/>
    </source>
</evidence>
<evidence type="ECO:0000269" key="3">
    <source>
    </source>
</evidence>
<evidence type="ECO:0000305" key="4"/>
<evidence type="ECO:0007744" key="5">
    <source>
        <dbReference type="PDB" id="5EY9"/>
    </source>
</evidence>
<evidence type="ECO:0007829" key="6">
    <source>
        <dbReference type="PDB" id="5EY9"/>
    </source>
</evidence>
<dbReference type="EC" id="6.2.1.20" evidence="2"/>
<dbReference type="EMBL" id="CP000854">
    <property type="protein sequence ID" value="ACC43769.1"/>
    <property type="molecule type" value="Genomic_DNA"/>
</dbReference>
<dbReference type="RefSeq" id="WP_012396868.1">
    <property type="nucleotide sequence ID" value="NC_010612.1"/>
</dbReference>
<dbReference type="PDB" id="5EY9">
    <property type="method" value="X-ray"/>
    <property type="resolution" value="2.50 A"/>
    <property type="chains" value="A/B=1-629"/>
</dbReference>
<dbReference type="PDBsum" id="5EY9"/>
<dbReference type="SMR" id="B2HMK0"/>
<dbReference type="STRING" id="216594.MMAR_5365"/>
<dbReference type="KEGG" id="mmi:MMAR_5365"/>
<dbReference type="eggNOG" id="COG0318">
    <property type="taxonomic scope" value="Bacteria"/>
</dbReference>
<dbReference type="HOGENOM" id="CLU_000022_23_7_11"/>
<dbReference type="OrthoDB" id="3671040at2"/>
<dbReference type="UniPathway" id="UPA00915"/>
<dbReference type="Proteomes" id="UP000001190">
    <property type="component" value="Chromosome"/>
</dbReference>
<dbReference type="GO" id="GO:0005886">
    <property type="term" value="C:plasma membrane"/>
    <property type="evidence" value="ECO:0007669"/>
    <property type="project" value="TreeGrafter"/>
</dbReference>
<dbReference type="GO" id="GO:0070566">
    <property type="term" value="F:adenylyltransferase activity"/>
    <property type="evidence" value="ECO:0007669"/>
    <property type="project" value="TreeGrafter"/>
</dbReference>
<dbReference type="GO" id="GO:0005524">
    <property type="term" value="F:ATP binding"/>
    <property type="evidence" value="ECO:0007669"/>
    <property type="project" value="UniProtKB-KW"/>
</dbReference>
<dbReference type="GO" id="GO:0008922">
    <property type="term" value="F:long-chain fatty acid [acyl-carrier-protein] ligase activity"/>
    <property type="evidence" value="ECO:0007669"/>
    <property type="project" value="UniProtKB-EC"/>
</dbReference>
<dbReference type="GO" id="GO:0006633">
    <property type="term" value="P:fatty acid biosynthetic process"/>
    <property type="evidence" value="ECO:0007669"/>
    <property type="project" value="TreeGrafter"/>
</dbReference>
<dbReference type="CDD" id="cd05931">
    <property type="entry name" value="FAAL"/>
    <property type="match status" value="1"/>
</dbReference>
<dbReference type="FunFam" id="3.30.300.30:FF:000029">
    <property type="entry name" value="Fatty-acid-CoA ligase FadD31"/>
    <property type="match status" value="1"/>
</dbReference>
<dbReference type="FunFam" id="3.40.50.12780:FF:000013">
    <property type="entry name" value="Long-chain-fatty-acid--AMP ligase FadD32"/>
    <property type="match status" value="1"/>
</dbReference>
<dbReference type="Gene3D" id="3.30.300.30">
    <property type="match status" value="1"/>
</dbReference>
<dbReference type="Gene3D" id="3.40.50.12780">
    <property type="entry name" value="N-terminal domain of ligase-like"/>
    <property type="match status" value="1"/>
</dbReference>
<dbReference type="InterPro" id="IPR045851">
    <property type="entry name" value="AMP-bd_C_sf"/>
</dbReference>
<dbReference type="InterPro" id="IPR000873">
    <property type="entry name" value="AMP-dep_synth/lig_dom"/>
</dbReference>
<dbReference type="InterPro" id="IPR042099">
    <property type="entry name" value="ANL_N_sf"/>
</dbReference>
<dbReference type="InterPro" id="IPR040097">
    <property type="entry name" value="FAAL/FAAC"/>
</dbReference>
<dbReference type="InterPro" id="IPR047968">
    <property type="entry name" value="FAAL_FadD32"/>
</dbReference>
<dbReference type="NCBIfam" id="NF038339">
    <property type="entry name" value="FAAL_FadD32"/>
    <property type="match status" value="1"/>
</dbReference>
<dbReference type="PANTHER" id="PTHR22754:SF32">
    <property type="entry name" value="DISCO-INTERACTING PROTEIN 2"/>
    <property type="match status" value="1"/>
</dbReference>
<dbReference type="PANTHER" id="PTHR22754">
    <property type="entry name" value="DISCO-INTERACTING PROTEIN 2 DIP2 -RELATED"/>
    <property type="match status" value="1"/>
</dbReference>
<dbReference type="Pfam" id="PF00501">
    <property type="entry name" value="AMP-binding"/>
    <property type="match status" value="1"/>
</dbReference>
<dbReference type="SUPFAM" id="SSF56801">
    <property type="entry name" value="Acetyl-CoA synthetase-like"/>
    <property type="match status" value="1"/>
</dbReference>
<comment type="function">
    <text evidence="2 3">Involved in the biosynthesis of mycolic acids (By similarity). Catalyzes the activation of long-chain fatty acids as acyl-adenylates (acyl-AMP), which are then transferred to the phosphopantetheine arm of the polyketide synthase Pks13 for further chain extension (By similarity). Can use dodecanoate (C12) and tetradecanoate (C14) (PubMed:26900152).</text>
</comment>
<comment type="catalytic activity">
    <reaction evidence="2">
        <text>a long-chain fatty acid + holo-[ACP] + ATP = a long-chain fatty acyl-[ACP] + AMP + diphosphate</text>
        <dbReference type="Rhea" id="RHEA:45588"/>
        <dbReference type="Rhea" id="RHEA-COMP:9685"/>
        <dbReference type="Rhea" id="RHEA-COMP:12682"/>
        <dbReference type="ChEBI" id="CHEBI:30616"/>
        <dbReference type="ChEBI" id="CHEBI:33019"/>
        <dbReference type="ChEBI" id="CHEBI:57560"/>
        <dbReference type="ChEBI" id="CHEBI:64479"/>
        <dbReference type="ChEBI" id="CHEBI:133243"/>
        <dbReference type="ChEBI" id="CHEBI:456215"/>
        <dbReference type="EC" id="6.2.1.20"/>
    </reaction>
    <physiologicalReaction direction="left-to-right" evidence="2">
        <dbReference type="Rhea" id="RHEA:45589"/>
    </physiologicalReaction>
</comment>
<comment type="catalytic activity">
    <reaction evidence="3">
        <text>dodecanoate + ATP + H(+) = dodecanoyl-AMP + diphosphate</text>
        <dbReference type="Rhea" id="RHEA:43712"/>
        <dbReference type="ChEBI" id="CHEBI:15378"/>
        <dbReference type="ChEBI" id="CHEBI:18262"/>
        <dbReference type="ChEBI" id="CHEBI:30616"/>
        <dbReference type="ChEBI" id="CHEBI:33019"/>
        <dbReference type="ChEBI" id="CHEBI:83623"/>
    </reaction>
    <physiologicalReaction direction="left-to-right" evidence="3">
        <dbReference type="Rhea" id="RHEA:43713"/>
    </physiologicalReaction>
</comment>
<comment type="catalytic activity">
    <reaction evidence="3">
        <text>tetradecanoate + ATP + H(+) = tetradecanoyl-AMP + diphosphate</text>
        <dbReference type="Rhea" id="RHEA:43704"/>
        <dbReference type="ChEBI" id="CHEBI:15378"/>
        <dbReference type="ChEBI" id="CHEBI:30616"/>
        <dbReference type="ChEBI" id="CHEBI:30807"/>
        <dbReference type="ChEBI" id="CHEBI:33019"/>
        <dbReference type="ChEBI" id="CHEBI:83626"/>
    </reaction>
    <physiologicalReaction direction="left-to-right" evidence="3">
        <dbReference type="Rhea" id="RHEA:43705"/>
    </physiologicalReaction>
</comment>
<comment type="activity regulation">
    <text evidence="3">The acyl-AMP ligase activity is inhibited by the alkylphosphate esters of AMP, adenosine 50-dodecylphosphate (AMPC12) and eicosyl-AMP (AMPC20).</text>
</comment>
<comment type="biophysicochemical properties">
    <kinetics>
        <KM evidence="3">103.2 uM for dodecanoate</KM>
        <KM evidence="3">5.76 uM for tetradecanoate</KM>
        <KM evidence="3">902 uM for ATP</KM>
        <text evidence="3">kcat is 1.51 min(-1) with dodecanoate as substrate (PubMed:26900152). kcat is 0.69 min(-1) with tetradecanoate as substrate (PubMed:26900152).</text>
    </kinetics>
</comment>
<comment type="pathway">
    <text evidence="2">Lipid metabolism; mycolic acid biosynthesis.</text>
</comment>
<comment type="subunit">
    <text evidence="3">Monomer.</text>
</comment>
<comment type="similarity">
    <text evidence="4">Belongs to the ATP-dependent AMP-binding enzyme family.</text>
</comment>
<proteinExistence type="evidence at protein level"/>
<keyword id="KW-0002">3D-structure</keyword>
<keyword id="KW-0067">ATP-binding</keyword>
<keyword id="KW-0276">Fatty acid metabolism</keyword>
<keyword id="KW-0436">Ligase</keyword>
<keyword id="KW-0443">Lipid metabolism</keyword>
<keyword id="KW-0547">Nucleotide-binding</keyword>
<keyword id="KW-1185">Reference proteome</keyword>
<accession>B2HMK0</accession>
<organism>
    <name type="scientific">Mycobacterium marinum (strain ATCC BAA-535 / M)</name>
    <dbReference type="NCBI Taxonomy" id="216594"/>
    <lineage>
        <taxon>Bacteria</taxon>
        <taxon>Bacillati</taxon>
        <taxon>Actinomycetota</taxon>
        <taxon>Actinomycetes</taxon>
        <taxon>Mycobacteriales</taxon>
        <taxon>Mycobacteriaceae</taxon>
        <taxon>Mycobacterium</taxon>
        <taxon>Mycobacterium ulcerans group</taxon>
    </lineage>
</organism>
<name>FAA32_MYCMM</name>